<organism>
    <name type="scientific">Methanosphaera stadtmanae (strain ATCC 43021 / DSM 3091 / JCM 11832 / MCB-3)</name>
    <dbReference type="NCBI Taxonomy" id="339860"/>
    <lineage>
        <taxon>Archaea</taxon>
        <taxon>Methanobacteriati</taxon>
        <taxon>Methanobacteriota</taxon>
        <taxon>Methanomada group</taxon>
        <taxon>Methanobacteria</taxon>
        <taxon>Methanobacteriales</taxon>
        <taxon>Methanobacteriaceae</taxon>
        <taxon>Methanosphaera</taxon>
    </lineage>
</organism>
<comment type="function">
    <text evidence="1">Involved in the synthesis of meso-diaminopimelate (m-DAP or DL-DAP), required for both lysine and peptidoglycan biosynthesis. Catalyzes the direct conversion of tetrahydrodipicolinate to LL-diaminopimelate.</text>
</comment>
<comment type="catalytic activity">
    <reaction evidence="1">
        <text>(2S,6S)-2,6-diaminopimelate + 2-oxoglutarate = (S)-2,3,4,5-tetrahydrodipicolinate + L-glutamate + H2O + H(+)</text>
        <dbReference type="Rhea" id="RHEA:23988"/>
        <dbReference type="ChEBI" id="CHEBI:15377"/>
        <dbReference type="ChEBI" id="CHEBI:15378"/>
        <dbReference type="ChEBI" id="CHEBI:16810"/>
        <dbReference type="ChEBI" id="CHEBI:16845"/>
        <dbReference type="ChEBI" id="CHEBI:29985"/>
        <dbReference type="ChEBI" id="CHEBI:57609"/>
        <dbReference type="EC" id="2.6.1.83"/>
    </reaction>
</comment>
<comment type="cofactor">
    <cofactor evidence="1">
        <name>pyridoxal 5'-phosphate</name>
        <dbReference type="ChEBI" id="CHEBI:597326"/>
    </cofactor>
</comment>
<comment type="pathway">
    <text evidence="1">Amino-acid biosynthesis; L-lysine biosynthesis via DAP pathway; LL-2,6-diaminopimelate from (S)-tetrahydrodipicolinate (aminotransferase route): step 1/1.</text>
</comment>
<comment type="subunit">
    <text evidence="1">Homodimer.</text>
</comment>
<comment type="similarity">
    <text evidence="1">Belongs to the class-I pyridoxal-phosphate-dependent aminotransferase family. LL-diaminopimelate aminotransferase subfamily.</text>
</comment>
<feature type="chain" id="PRO_0000342258" description="LL-diaminopimelate aminotransferase">
    <location>
        <begin position="1"/>
        <end position="411"/>
    </location>
</feature>
<feature type="binding site" evidence="1">
    <location>
        <position position="16"/>
    </location>
    <ligand>
        <name>substrate</name>
    </ligand>
</feature>
<feature type="binding site" evidence="1">
    <location>
        <position position="43"/>
    </location>
    <ligand>
        <name>substrate</name>
    </ligand>
</feature>
<feature type="binding site" evidence="1">
    <location>
        <position position="73"/>
    </location>
    <ligand>
        <name>pyridoxal 5'-phosphate</name>
        <dbReference type="ChEBI" id="CHEBI:597326"/>
    </ligand>
</feature>
<feature type="binding site" evidence="1">
    <location>
        <begin position="109"/>
        <end position="110"/>
    </location>
    <ligand>
        <name>pyridoxal 5'-phosphate</name>
        <dbReference type="ChEBI" id="CHEBI:597326"/>
    </ligand>
</feature>
<feature type="binding site" evidence="1">
    <location>
        <position position="110"/>
    </location>
    <ligand>
        <name>substrate</name>
    </ligand>
</feature>
<feature type="binding site" evidence="1">
    <location>
        <position position="133"/>
    </location>
    <ligand>
        <name>pyridoxal 5'-phosphate</name>
        <dbReference type="ChEBI" id="CHEBI:597326"/>
    </ligand>
</feature>
<feature type="binding site" evidence="1">
    <location>
        <position position="133"/>
    </location>
    <ligand>
        <name>substrate</name>
    </ligand>
</feature>
<feature type="binding site" evidence="1">
    <location>
        <position position="188"/>
    </location>
    <ligand>
        <name>pyridoxal 5'-phosphate</name>
        <dbReference type="ChEBI" id="CHEBI:597326"/>
    </ligand>
</feature>
<feature type="binding site" evidence="1">
    <location>
        <position position="188"/>
    </location>
    <ligand>
        <name>substrate</name>
    </ligand>
</feature>
<feature type="binding site" evidence="1">
    <location>
        <position position="219"/>
    </location>
    <ligand>
        <name>pyridoxal 5'-phosphate</name>
        <dbReference type="ChEBI" id="CHEBI:597326"/>
    </ligand>
</feature>
<feature type="binding site" evidence="1">
    <location>
        <begin position="247"/>
        <end position="249"/>
    </location>
    <ligand>
        <name>pyridoxal 5'-phosphate</name>
        <dbReference type="ChEBI" id="CHEBI:597326"/>
    </ligand>
</feature>
<feature type="binding site" evidence="1">
    <location>
        <position position="258"/>
    </location>
    <ligand>
        <name>pyridoxal 5'-phosphate</name>
        <dbReference type="ChEBI" id="CHEBI:597326"/>
    </ligand>
</feature>
<feature type="binding site" evidence="1">
    <location>
        <position position="293"/>
    </location>
    <ligand>
        <name>pyridoxal 5'-phosphate</name>
        <dbReference type="ChEBI" id="CHEBI:597326"/>
    </ligand>
</feature>
<feature type="binding site" evidence="1">
    <location>
        <position position="293"/>
    </location>
    <ligand>
        <name>substrate</name>
    </ligand>
</feature>
<feature type="binding site" evidence="1">
    <location>
        <position position="389"/>
    </location>
    <ligand>
        <name>substrate</name>
    </ligand>
</feature>
<feature type="modified residue" description="N6-(pyridoxal phosphate)lysine" evidence="1">
    <location>
        <position position="250"/>
    </location>
</feature>
<reference key="1">
    <citation type="journal article" date="2006" name="J. Bacteriol.">
        <title>The genome sequence of Methanosphaera stadtmanae reveals why this human intestinal archaeon is restricted to methanol and H2 for methane formation and ATP synthesis.</title>
        <authorList>
            <person name="Fricke W.F."/>
            <person name="Seedorf H."/>
            <person name="Henne A."/>
            <person name="Kruer M."/>
            <person name="Liesegang H."/>
            <person name="Hedderich R."/>
            <person name="Gottschalk G."/>
            <person name="Thauer R.K."/>
        </authorList>
    </citation>
    <scope>NUCLEOTIDE SEQUENCE [LARGE SCALE GENOMIC DNA]</scope>
    <source>
        <strain>ATCC 43021 / DSM 3091 / JCM 11832 / MCB-3</strain>
    </source>
</reference>
<name>DAPAT_METST</name>
<protein>
    <recommendedName>
        <fullName evidence="1">LL-diaminopimelate aminotransferase</fullName>
        <shortName evidence="1">DAP-AT</shortName>
        <shortName evidence="1">DAP-aminotransferase</shortName>
        <shortName evidence="1">LL-DAP-aminotransferase</shortName>
        <ecNumber evidence="1">2.6.1.83</ecNumber>
    </recommendedName>
</protein>
<evidence type="ECO:0000255" key="1">
    <source>
        <dbReference type="HAMAP-Rule" id="MF_01642"/>
    </source>
</evidence>
<keyword id="KW-0032">Aminotransferase</keyword>
<keyword id="KW-0663">Pyridoxal phosphate</keyword>
<keyword id="KW-1185">Reference proteome</keyword>
<keyword id="KW-0808">Transferase</keyword>
<sequence>MAVKVNEYYSLIQNNYLFVEIARRVDEYQKENPDANLIKMGIGDVTRPLAKSVVEAFKRAVDELGDADTFRGYGPEQGYDFLIEDVIENDYKPLGVELKNSEVFISDGAKCDTGNFQELFSKDNIIAVTDPVYPVYVDSNVMAGRSGKMGEDGFYENIVYLPATSENDFVPSLPSEKVDIIYLCYPNNPTGTTLTKEQLKEWVDYAHENDALILFDAAYESFIKTPGIPHSIFEIEGAKDVAVEFRSYSKVAGFTGTRCAYCVVPEEVYVKDANGNKVQLNPLWNRRQSTKFNGVSYPVQRAAQAIYTPEGKKEIQENLDYYVKNAQVIRESLEKMGLKVYGGVDSPYIWFKTPNDIDSWSFFDILLKEAHVVSTPGAGFGPSGEGYLRLTAFNTYENTVEAMDRISKLEF</sequence>
<dbReference type="EC" id="2.6.1.83" evidence="1"/>
<dbReference type="EMBL" id="CP000102">
    <property type="protein sequence ID" value="ABC57312.1"/>
    <property type="molecule type" value="Genomic_DNA"/>
</dbReference>
<dbReference type="RefSeq" id="WP_011406511.1">
    <property type="nucleotide sequence ID" value="NC_007681.1"/>
</dbReference>
<dbReference type="SMR" id="Q2NFU1"/>
<dbReference type="STRING" id="339860.Msp_0924"/>
<dbReference type="KEGG" id="mst:Msp_0924"/>
<dbReference type="eggNOG" id="arCOG01133">
    <property type="taxonomic scope" value="Archaea"/>
</dbReference>
<dbReference type="HOGENOM" id="CLU_051433_0_0_2"/>
<dbReference type="OrthoDB" id="372018at2157"/>
<dbReference type="BRENDA" id="2.6.1.83">
    <property type="organism ID" value="10175"/>
</dbReference>
<dbReference type="UniPathway" id="UPA00034">
    <property type="reaction ID" value="UER00466"/>
</dbReference>
<dbReference type="Proteomes" id="UP000001931">
    <property type="component" value="Chromosome"/>
</dbReference>
<dbReference type="GO" id="GO:0010285">
    <property type="term" value="F:L,L-diaminopimelate aminotransferase activity"/>
    <property type="evidence" value="ECO:0007669"/>
    <property type="project" value="UniProtKB-UniRule"/>
</dbReference>
<dbReference type="GO" id="GO:0030170">
    <property type="term" value="F:pyridoxal phosphate binding"/>
    <property type="evidence" value="ECO:0007669"/>
    <property type="project" value="UniProtKB-UniRule"/>
</dbReference>
<dbReference type="GO" id="GO:0033362">
    <property type="term" value="P:lysine biosynthetic process via diaminopimelate, diaminopimelate-aminotransferase pathway"/>
    <property type="evidence" value="ECO:0007669"/>
    <property type="project" value="UniProtKB-UniRule"/>
</dbReference>
<dbReference type="CDD" id="cd00609">
    <property type="entry name" value="AAT_like"/>
    <property type="match status" value="1"/>
</dbReference>
<dbReference type="FunFam" id="3.40.640.10:FF:000099">
    <property type="entry name" value="LL-diaminopimelate aminotransferase, chloroplastic"/>
    <property type="match status" value="1"/>
</dbReference>
<dbReference type="Gene3D" id="3.90.1150.10">
    <property type="entry name" value="Aspartate Aminotransferase, domain 1"/>
    <property type="match status" value="1"/>
</dbReference>
<dbReference type="Gene3D" id="3.40.640.10">
    <property type="entry name" value="Type I PLP-dependent aspartate aminotransferase-like (Major domain)"/>
    <property type="match status" value="1"/>
</dbReference>
<dbReference type="HAMAP" id="MF_01642">
    <property type="entry name" value="DapL_aminotrans_1"/>
    <property type="match status" value="1"/>
</dbReference>
<dbReference type="InterPro" id="IPR004839">
    <property type="entry name" value="Aminotransferase_I/II_large"/>
</dbReference>
<dbReference type="InterPro" id="IPR019942">
    <property type="entry name" value="DapL/ALD1"/>
</dbReference>
<dbReference type="InterPro" id="IPR015424">
    <property type="entry name" value="PyrdxlP-dep_Trfase"/>
</dbReference>
<dbReference type="InterPro" id="IPR015421">
    <property type="entry name" value="PyrdxlP-dep_Trfase_major"/>
</dbReference>
<dbReference type="InterPro" id="IPR015422">
    <property type="entry name" value="PyrdxlP-dep_Trfase_small"/>
</dbReference>
<dbReference type="NCBIfam" id="TIGR03542">
    <property type="entry name" value="DAPAT_plant"/>
    <property type="match status" value="1"/>
</dbReference>
<dbReference type="PANTHER" id="PTHR43144">
    <property type="entry name" value="AMINOTRANSFERASE"/>
    <property type="match status" value="1"/>
</dbReference>
<dbReference type="Pfam" id="PF00155">
    <property type="entry name" value="Aminotran_1_2"/>
    <property type="match status" value="1"/>
</dbReference>
<dbReference type="SUPFAM" id="SSF53383">
    <property type="entry name" value="PLP-dependent transferases"/>
    <property type="match status" value="1"/>
</dbReference>
<proteinExistence type="inferred from homology"/>
<gene>
    <name evidence="1" type="primary">dapL</name>
    <name type="ordered locus">Msp_0924</name>
</gene>
<accession>Q2NFU1</accession>